<dbReference type="EC" id="4.2.1.59" evidence="1"/>
<dbReference type="EC" id="5.3.3.14" evidence="1"/>
<dbReference type="EMBL" id="CP001138">
    <property type="protein sequence ID" value="ACH51722.1"/>
    <property type="molecule type" value="Genomic_DNA"/>
</dbReference>
<dbReference type="RefSeq" id="WP_000227928.1">
    <property type="nucleotide sequence ID" value="NC_011149.1"/>
</dbReference>
<dbReference type="SMR" id="B5F1V1"/>
<dbReference type="KEGG" id="sea:SeAg_B1025"/>
<dbReference type="HOGENOM" id="CLU_097925_0_0_6"/>
<dbReference type="UniPathway" id="UPA00094"/>
<dbReference type="Proteomes" id="UP000008819">
    <property type="component" value="Chromosome"/>
</dbReference>
<dbReference type="GO" id="GO:0005737">
    <property type="term" value="C:cytoplasm"/>
    <property type="evidence" value="ECO:0007669"/>
    <property type="project" value="UniProtKB-SubCell"/>
</dbReference>
<dbReference type="GO" id="GO:0019171">
    <property type="term" value="F:(3R)-hydroxyacyl-[acyl-carrier-protein] dehydratase activity"/>
    <property type="evidence" value="ECO:0007669"/>
    <property type="project" value="UniProtKB-UniRule"/>
</dbReference>
<dbReference type="GO" id="GO:0034017">
    <property type="term" value="F:trans-2-decenoyl-acyl-carrier-protein isomerase activity"/>
    <property type="evidence" value="ECO:0007669"/>
    <property type="project" value="UniProtKB-UniRule"/>
</dbReference>
<dbReference type="GO" id="GO:0006636">
    <property type="term" value="P:unsaturated fatty acid biosynthetic process"/>
    <property type="evidence" value="ECO:0007669"/>
    <property type="project" value="UniProtKB-UniRule"/>
</dbReference>
<dbReference type="CDD" id="cd01287">
    <property type="entry name" value="FabA"/>
    <property type="match status" value="1"/>
</dbReference>
<dbReference type="FunFam" id="3.10.129.10:FF:000003">
    <property type="entry name" value="3-hydroxydecanoyl-[acyl-carrier-protein] dehydratase"/>
    <property type="match status" value="1"/>
</dbReference>
<dbReference type="Gene3D" id="3.10.129.10">
    <property type="entry name" value="Hotdog Thioesterase"/>
    <property type="match status" value="1"/>
</dbReference>
<dbReference type="HAMAP" id="MF_00405">
    <property type="entry name" value="FabA"/>
    <property type="match status" value="1"/>
</dbReference>
<dbReference type="InterPro" id="IPR010083">
    <property type="entry name" value="FabA"/>
</dbReference>
<dbReference type="InterPro" id="IPR013114">
    <property type="entry name" value="FabA_FabZ"/>
</dbReference>
<dbReference type="InterPro" id="IPR029069">
    <property type="entry name" value="HotDog_dom_sf"/>
</dbReference>
<dbReference type="NCBIfam" id="TIGR01749">
    <property type="entry name" value="fabA"/>
    <property type="match status" value="1"/>
</dbReference>
<dbReference type="NCBIfam" id="NF003509">
    <property type="entry name" value="PRK05174.1"/>
    <property type="match status" value="1"/>
</dbReference>
<dbReference type="PANTHER" id="PTHR30272">
    <property type="entry name" value="3-HYDROXYACYL-[ACYL-CARRIER-PROTEIN] DEHYDRATASE"/>
    <property type="match status" value="1"/>
</dbReference>
<dbReference type="PANTHER" id="PTHR30272:SF8">
    <property type="entry name" value="3-HYDROXYDECANOYL-[ACYL-CARRIER-PROTEIN] DEHYDRATASE"/>
    <property type="match status" value="1"/>
</dbReference>
<dbReference type="Pfam" id="PF07977">
    <property type="entry name" value="FabA"/>
    <property type="match status" value="1"/>
</dbReference>
<dbReference type="SUPFAM" id="SSF54637">
    <property type="entry name" value="Thioesterase/thiol ester dehydrase-isomerase"/>
    <property type="match status" value="1"/>
</dbReference>
<organism>
    <name type="scientific">Salmonella agona (strain SL483)</name>
    <dbReference type="NCBI Taxonomy" id="454166"/>
    <lineage>
        <taxon>Bacteria</taxon>
        <taxon>Pseudomonadati</taxon>
        <taxon>Pseudomonadota</taxon>
        <taxon>Gammaproteobacteria</taxon>
        <taxon>Enterobacterales</taxon>
        <taxon>Enterobacteriaceae</taxon>
        <taxon>Salmonella</taxon>
    </lineage>
</organism>
<keyword id="KW-0963">Cytoplasm</keyword>
<keyword id="KW-0275">Fatty acid biosynthesis</keyword>
<keyword id="KW-0276">Fatty acid metabolism</keyword>
<keyword id="KW-0413">Isomerase</keyword>
<keyword id="KW-0444">Lipid biosynthesis</keyword>
<keyword id="KW-0443">Lipid metabolism</keyword>
<keyword id="KW-0456">Lyase</keyword>
<gene>
    <name evidence="1" type="primary">fabA</name>
    <name type="ordered locus">SeAg_B1025</name>
</gene>
<proteinExistence type="inferred from homology"/>
<evidence type="ECO:0000255" key="1">
    <source>
        <dbReference type="HAMAP-Rule" id="MF_00405"/>
    </source>
</evidence>
<sequence length="172" mass="19047">MVDKRESYTKEDLLASGRGELFGAKGPQLPAPNMLMMDRVVKMTETGGNFDKGYVEAELDINPDLWFFGCHFIGDPVMPGCLGLDAMWQLVGFYLGWLGGEGKGRALGVGEVKFTGQVLPTARKVTYRIHFKRIVNRRLIMGLADGEVLVDGRLIYTAHDLKVGLFQDTSAF</sequence>
<reference key="1">
    <citation type="journal article" date="2011" name="J. Bacteriol.">
        <title>Comparative genomics of 28 Salmonella enterica isolates: evidence for CRISPR-mediated adaptive sublineage evolution.</title>
        <authorList>
            <person name="Fricke W.F."/>
            <person name="Mammel M.K."/>
            <person name="McDermott P.F."/>
            <person name="Tartera C."/>
            <person name="White D.G."/>
            <person name="Leclerc J.E."/>
            <person name="Ravel J."/>
            <person name="Cebula T.A."/>
        </authorList>
    </citation>
    <scope>NUCLEOTIDE SEQUENCE [LARGE SCALE GENOMIC DNA]</scope>
    <source>
        <strain>SL483</strain>
    </source>
</reference>
<name>FABA_SALA4</name>
<feature type="chain" id="PRO_1000201198" description="3-hydroxydecanoyl-[acyl-carrier-protein] dehydratase">
    <location>
        <begin position="1"/>
        <end position="172"/>
    </location>
</feature>
<feature type="active site" evidence="1">
    <location>
        <position position="71"/>
    </location>
</feature>
<comment type="function">
    <text evidence="1">Necessary for the introduction of cis unsaturation into fatty acids. Catalyzes the dehydration of (3R)-3-hydroxydecanoyl-ACP to E-(2)-decenoyl-ACP and then its isomerization to Z-(3)-decenoyl-ACP. Can catalyze the dehydratase reaction for beta-hydroxyacyl-ACPs with saturated chain lengths up to 16:0, being most active on intermediate chain length.</text>
</comment>
<comment type="catalytic activity">
    <reaction evidence="1">
        <text>a (3R)-hydroxyacyl-[ACP] = a (2E)-enoyl-[ACP] + H2O</text>
        <dbReference type="Rhea" id="RHEA:13097"/>
        <dbReference type="Rhea" id="RHEA-COMP:9925"/>
        <dbReference type="Rhea" id="RHEA-COMP:9945"/>
        <dbReference type="ChEBI" id="CHEBI:15377"/>
        <dbReference type="ChEBI" id="CHEBI:78784"/>
        <dbReference type="ChEBI" id="CHEBI:78827"/>
        <dbReference type="EC" id="4.2.1.59"/>
    </reaction>
</comment>
<comment type="catalytic activity">
    <reaction evidence="1">
        <text>(3R)-hydroxydecanoyl-[ACP] = (2E)-decenoyl-[ACP] + H2O</text>
        <dbReference type="Rhea" id="RHEA:41860"/>
        <dbReference type="Rhea" id="RHEA-COMP:9638"/>
        <dbReference type="Rhea" id="RHEA-COMP:9639"/>
        <dbReference type="ChEBI" id="CHEBI:15377"/>
        <dbReference type="ChEBI" id="CHEBI:78466"/>
        <dbReference type="ChEBI" id="CHEBI:78467"/>
    </reaction>
</comment>
<comment type="catalytic activity">
    <reaction evidence="1">
        <text>(2E)-decenoyl-[ACP] = (3Z)-decenoyl-[ACP]</text>
        <dbReference type="Rhea" id="RHEA:23568"/>
        <dbReference type="Rhea" id="RHEA-COMP:9639"/>
        <dbReference type="Rhea" id="RHEA-COMP:9927"/>
        <dbReference type="ChEBI" id="CHEBI:78467"/>
        <dbReference type="ChEBI" id="CHEBI:78798"/>
        <dbReference type="EC" id="5.3.3.14"/>
    </reaction>
</comment>
<comment type="pathway">
    <text evidence="1">Lipid metabolism; fatty acid biosynthesis.</text>
</comment>
<comment type="subunit">
    <text evidence="1">Homodimer.</text>
</comment>
<comment type="subcellular location">
    <subcellularLocation>
        <location evidence="1">Cytoplasm</location>
    </subcellularLocation>
</comment>
<comment type="similarity">
    <text evidence="1">Belongs to the thioester dehydratase family. FabA subfamily.</text>
</comment>
<protein>
    <recommendedName>
        <fullName evidence="1">3-hydroxydecanoyl-[acyl-carrier-protein] dehydratase</fullName>
        <ecNumber evidence="1">4.2.1.59</ecNumber>
    </recommendedName>
    <alternativeName>
        <fullName evidence="1">3-hydroxyacyl-[acyl-carrier-protein] dehydratase FabA</fullName>
    </alternativeName>
    <alternativeName>
        <fullName evidence="1">Beta-hydroxydecanoyl thioester dehydrase</fullName>
    </alternativeName>
    <alternativeName>
        <fullName evidence="1">Trans-2-decenoyl-[acyl-carrier-protein] isomerase</fullName>
        <ecNumber evidence="1">5.3.3.14</ecNumber>
    </alternativeName>
</protein>
<accession>B5F1V1</accession>